<protein>
    <recommendedName>
        <fullName evidence="1">Shikimate dehydrogenase (NADP(+))</fullName>
        <shortName evidence="1">SDH</shortName>
        <ecNumber evidence="1">1.1.1.25</ecNumber>
    </recommendedName>
</protein>
<gene>
    <name evidence="1" type="primary">aroE</name>
    <name type="ordered locus">RSKD131_2632</name>
</gene>
<proteinExistence type="inferred from homology"/>
<name>AROE_CERSK</name>
<dbReference type="EC" id="1.1.1.25" evidence="1"/>
<dbReference type="EMBL" id="CP001150">
    <property type="protein sequence ID" value="ACM02492.1"/>
    <property type="molecule type" value="Genomic_DNA"/>
</dbReference>
<dbReference type="RefSeq" id="WP_015921556.1">
    <property type="nucleotide sequence ID" value="NC_011963.1"/>
</dbReference>
<dbReference type="SMR" id="B9KPV7"/>
<dbReference type="GeneID" id="67448006"/>
<dbReference type="KEGG" id="rsk:RSKD131_2632"/>
<dbReference type="HOGENOM" id="CLU_044063_2_0_5"/>
<dbReference type="UniPathway" id="UPA00053">
    <property type="reaction ID" value="UER00087"/>
</dbReference>
<dbReference type="GO" id="GO:0005829">
    <property type="term" value="C:cytosol"/>
    <property type="evidence" value="ECO:0007669"/>
    <property type="project" value="TreeGrafter"/>
</dbReference>
<dbReference type="GO" id="GO:0050661">
    <property type="term" value="F:NADP binding"/>
    <property type="evidence" value="ECO:0007669"/>
    <property type="project" value="InterPro"/>
</dbReference>
<dbReference type="GO" id="GO:0004764">
    <property type="term" value="F:shikimate 3-dehydrogenase (NADP+) activity"/>
    <property type="evidence" value="ECO:0007669"/>
    <property type="project" value="UniProtKB-UniRule"/>
</dbReference>
<dbReference type="GO" id="GO:0008652">
    <property type="term" value="P:amino acid biosynthetic process"/>
    <property type="evidence" value="ECO:0007669"/>
    <property type="project" value="UniProtKB-KW"/>
</dbReference>
<dbReference type="GO" id="GO:0009073">
    <property type="term" value="P:aromatic amino acid family biosynthetic process"/>
    <property type="evidence" value="ECO:0007669"/>
    <property type="project" value="UniProtKB-KW"/>
</dbReference>
<dbReference type="GO" id="GO:0009423">
    <property type="term" value="P:chorismate biosynthetic process"/>
    <property type="evidence" value="ECO:0007669"/>
    <property type="project" value="UniProtKB-UniRule"/>
</dbReference>
<dbReference type="GO" id="GO:0019632">
    <property type="term" value="P:shikimate metabolic process"/>
    <property type="evidence" value="ECO:0007669"/>
    <property type="project" value="InterPro"/>
</dbReference>
<dbReference type="CDD" id="cd01065">
    <property type="entry name" value="NAD_bind_Shikimate_DH"/>
    <property type="match status" value="1"/>
</dbReference>
<dbReference type="Gene3D" id="3.40.50.10860">
    <property type="entry name" value="Leucine Dehydrogenase, chain A, domain 1"/>
    <property type="match status" value="1"/>
</dbReference>
<dbReference type="Gene3D" id="3.40.50.720">
    <property type="entry name" value="NAD(P)-binding Rossmann-like Domain"/>
    <property type="match status" value="1"/>
</dbReference>
<dbReference type="HAMAP" id="MF_00222">
    <property type="entry name" value="Shikimate_DH_AroE"/>
    <property type="match status" value="1"/>
</dbReference>
<dbReference type="InterPro" id="IPR046346">
    <property type="entry name" value="Aminoacid_DH-like_N_sf"/>
</dbReference>
<dbReference type="InterPro" id="IPR036291">
    <property type="entry name" value="NAD(P)-bd_dom_sf"/>
</dbReference>
<dbReference type="InterPro" id="IPR041121">
    <property type="entry name" value="SDH_C"/>
</dbReference>
<dbReference type="InterPro" id="IPR011342">
    <property type="entry name" value="Shikimate_DH"/>
</dbReference>
<dbReference type="InterPro" id="IPR013708">
    <property type="entry name" value="Shikimate_DH-bd_N"/>
</dbReference>
<dbReference type="InterPro" id="IPR022893">
    <property type="entry name" value="Shikimate_DH_fam"/>
</dbReference>
<dbReference type="InterPro" id="IPR006151">
    <property type="entry name" value="Shikm_DH/Glu-tRNA_Rdtase"/>
</dbReference>
<dbReference type="NCBIfam" id="TIGR00507">
    <property type="entry name" value="aroE"/>
    <property type="match status" value="1"/>
</dbReference>
<dbReference type="NCBIfam" id="NF001312">
    <property type="entry name" value="PRK00258.1-4"/>
    <property type="match status" value="1"/>
</dbReference>
<dbReference type="PANTHER" id="PTHR21089:SF1">
    <property type="entry name" value="BIFUNCTIONAL 3-DEHYDROQUINATE DEHYDRATASE_SHIKIMATE DEHYDROGENASE, CHLOROPLASTIC"/>
    <property type="match status" value="1"/>
</dbReference>
<dbReference type="PANTHER" id="PTHR21089">
    <property type="entry name" value="SHIKIMATE DEHYDROGENASE"/>
    <property type="match status" value="1"/>
</dbReference>
<dbReference type="Pfam" id="PF18317">
    <property type="entry name" value="SDH_C"/>
    <property type="match status" value="1"/>
</dbReference>
<dbReference type="Pfam" id="PF01488">
    <property type="entry name" value="Shikimate_DH"/>
    <property type="match status" value="1"/>
</dbReference>
<dbReference type="Pfam" id="PF08501">
    <property type="entry name" value="Shikimate_dh_N"/>
    <property type="match status" value="1"/>
</dbReference>
<dbReference type="SUPFAM" id="SSF53223">
    <property type="entry name" value="Aminoacid dehydrogenase-like, N-terminal domain"/>
    <property type="match status" value="1"/>
</dbReference>
<dbReference type="SUPFAM" id="SSF51735">
    <property type="entry name" value="NAD(P)-binding Rossmann-fold domains"/>
    <property type="match status" value="1"/>
</dbReference>
<accession>B9KPV7</accession>
<organism>
    <name type="scientific">Cereibacter sphaeroides (strain KD131 / KCTC 12085)</name>
    <name type="common">Rhodobacter sphaeroides</name>
    <dbReference type="NCBI Taxonomy" id="557760"/>
    <lineage>
        <taxon>Bacteria</taxon>
        <taxon>Pseudomonadati</taxon>
        <taxon>Pseudomonadota</taxon>
        <taxon>Alphaproteobacteria</taxon>
        <taxon>Rhodobacterales</taxon>
        <taxon>Paracoccaceae</taxon>
        <taxon>Cereibacter</taxon>
    </lineage>
</organism>
<sequence>MTELTRIPLAGVIGLPIAHSRSPALHGYWLKRYGLKGHYIPMDVAQADLRDVLAAMPRMGFVGCNVTIPHKESVIGLADIVTDRAALIGAANTLIFRKDGKIHADNTDGTGFTANLRQNAPAWQPQSGPAVVWGAGGAARAVIAALIEVGVPEIRLANRSRARADALRSDFGAKVHVHDWVQAGNILEDAVTVVNTTSLGMVGKPEFRVPLDALNPKAVVTDLVYAPLRTRLLVEAEAAGCRTVDGLGMLLHQAAPGFERWFGVRPEVDEETRAAVLAT</sequence>
<keyword id="KW-0028">Amino-acid biosynthesis</keyword>
<keyword id="KW-0057">Aromatic amino acid biosynthesis</keyword>
<keyword id="KW-0521">NADP</keyword>
<keyword id="KW-0560">Oxidoreductase</keyword>
<feature type="chain" id="PRO_1000124892" description="Shikimate dehydrogenase (NADP(+))">
    <location>
        <begin position="1"/>
        <end position="279"/>
    </location>
</feature>
<feature type="active site" description="Proton acceptor" evidence="1">
    <location>
        <position position="71"/>
    </location>
</feature>
<feature type="binding site" evidence="1">
    <location>
        <begin position="20"/>
        <end position="22"/>
    </location>
    <ligand>
        <name>shikimate</name>
        <dbReference type="ChEBI" id="CHEBI:36208"/>
    </ligand>
</feature>
<feature type="binding site" evidence="1">
    <location>
        <position position="67"/>
    </location>
    <ligand>
        <name>shikimate</name>
        <dbReference type="ChEBI" id="CHEBI:36208"/>
    </ligand>
</feature>
<feature type="binding site" evidence="1">
    <location>
        <position position="83"/>
    </location>
    <ligand>
        <name>NADP(+)</name>
        <dbReference type="ChEBI" id="CHEBI:58349"/>
    </ligand>
</feature>
<feature type="binding site" evidence="1">
    <location>
        <position position="92"/>
    </location>
    <ligand>
        <name>shikimate</name>
        <dbReference type="ChEBI" id="CHEBI:36208"/>
    </ligand>
</feature>
<feature type="binding site" evidence="1">
    <location>
        <position position="108"/>
    </location>
    <ligand>
        <name>shikimate</name>
        <dbReference type="ChEBI" id="CHEBI:36208"/>
    </ligand>
</feature>
<feature type="binding site" evidence="1">
    <location>
        <begin position="134"/>
        <end position="138"/>
    </location>
    <ligand>
        <name>NADP(+)</name>
        <dbReference type="ChEBI" id="CHEBI:58349"/>
    </ligand>
</feature>
<feature type="binding site" evidence="1">
    <location>
        <position position="223"/>
    </location>
    <ligand>
        <name>NADP(+)</name>
        <dbReference type="ChEBI" id="CHEBI:58349"/>
    </ligand>
</feature>
<feature type="binding site" evidence="1">
    <location>
        <position position="225"/>
    </location>
    <ligand>
        <name>shikimate</name>
        <dbReference type="ChEBI" id="CHEBI:36208"/>
    </ligand>
</feature>
<feature type="binding site" evidence="1">
    <location>
        <position position="246"/>
    </location>
    <ligand>
        <name>NADP(+)</name>
        <dbReference type="ChEBI" id="CHEBI:58349"/>
    </ligand>
</feature>
<comment type="function">
    <text evidence="1">Involved in the biosynthesis of the chorismate, which leads to the biosynthesis of aromatic amino acids. Catalyzes the reversible NADPH linked reduction of 3-dehydroshikimate (DHSA) to yield shikimate (SA).</text>
</comment>
<comment type="catalytic activity">
    <reaction evidence="1">
        <text>shikimate + NADP(+) = 3-dehydroshikimate + NADPH + H(+)</text>
        <dbReference type="Rhea" id="RHEA:17737"/>
        <dbReference type="ChEBI" id="CHEBI:15378"/>
        <dbReference type="ChEBI" id="CHEBI:16630"/>
        <dbReference type="ChEBI" id="CHEBI:36208"/>
        <dbReference type="ChEBI" id="CHEBI:57783"/>
        <dbReference type="ChEBI" id="CHEBI:58349"/>
        <dbReference type="EC" id="1.1.1.25"/>
    </reaction>
</comment>
<comment type="pathway">
    <text evidence="1">Metabolic intermediate biosynthesis; chorismate biosynthesis; chorismate from D-erythrose 4-phosphate and phosphoenolpyruvate: step 4/7.</text>
</comment>
<comment type="subunit">
    <text evidence="1">Homodimer.</text>
</comment>
<comment type="similarity">
    <text evidence="1">Belongs to the shikimate dehydrogenase family.</text>
</comment>
<reference key="1">
    <citation type="journal article" date="2009" name="J. Bacteriol.">
        <title>Complete genome sequence of Rhodobacter sphaeroides KD131.</title>
        <authorList>
            <person name="Lim S.-K."/>
            <person name="Kim S.J."/>
            <person name="Cha S.H."/>
            <person name="Oh Y.-K."/>
            <person name="Rhee H.-J."/>
            <person name="Kim M.-S."/>
            <person name="Lee J.K."/>
        </authorList>
    </citation>
    <scope>NUCLEOTIDE SEQUENCE [LARGE SCALE GENOMIC DNA]</scope>
    <source>
        <strain>KD131 / KCTC 12085</strain>
    </source>
</reference>
<evidence type="ECO:0000255" key="1">
    <source>
        <dbReference type="HAMAP-Rule" id="MF_00222"/>
    </source>
</evidence>